<protein>
    <recommendedName>
        <fullName evidence="1">UDP-N-acetylglucosamine 1-carboxyvinyltransferase</fullName>
        <ecNumber evidence="1">2.5.1.7</ecNumber>
    </recommendedName>
    <alternativeName>
        <fullName evidence="1">Enoylpyruvate transferase</fullName>
    </alternativeName>
    <alternativeName>
        <fullName evidence="1">UDP-N-acetylglucosamine enolpyruvyl transferase</fullName>
        <shortName evidence="1">EPT</shortName>
    </alternativeName>
</protein>
<dbReference type="EC" id="2.5.1.7" evidence="1"/>
<dbReference type="EMBL" id="CP001191">
    <property type="protein sequence ID" value="ACI53537.1"/>
    <property type="molecule type" value="Genomic_DNA"/>
</dbReference>
<dbReference type="RefSeq" id="WP_003588682.1">
    <property type="nucleotide sequence ID" value="NC_011369.1"/>
</dbReference>
<dbReference type="SMR" id="B5ZPM0"/>
<dbReference type="STRING" id="395492.Rleg2_0237"/>
<dbReference type="KEGG" id="rlt:Rleg2_0237"/>
<dbReference type="eggNOG" id="COG0766">
    <property type="taxonomic scope" value="Bacteria"/>
</dbReference>
<dbReference type="HOGENOM" id="CLU_027387_0_0_5"/>
<dbReference type="UniPathway" id="UPA00219"/>
<dbReference type="Proteomes" id="UP000008330">
    <property type="component" value="Chromosome"/>
</dbReference>
<dbReference type="GO" id="GO:0005737">
    <property type="term" value="C:cytoplasm"/>
    <property type="evidence" value="ECO:0007669"/>
    <property type="project" value="UniProtKB-SubCell"/>
</dbReference>
<dbReference type="GO" id="GO:0008760">
    <property type="term" value="F:UDP-N-acetylglucosamine 1-carboxyvinyltransferase activity"/>
    <property type="evidence" value="ECO:0007669"/>
    <property type="project" value="UniProtKB-UniRule"/>
</dbReference>
<dbReference type="GO" id="GO:0051301">
    <property type="term" value="P:cell division"/>
    <property type="evidence" value="ECO:0007669"/>
    <property type="project" value="UniProtKB-KW"/>
</dbReference>
<dbReference type="GO" id="GO:0071555">
    <property type="term" value="P:cell wall organization"/>
    <property type="evidence" value="ECO:0007669"/>
    <property type="project" value="UniProtKB-KW"/>
</dbReference>
<dbReference type="GO" id="GO:0009252">
    <property type="term" value="P:peptidoglycan biosynthetic process"/>
    <property type="evidence" value="ECO:0007669"/>
    <property type="project" value="UniProtKB-UniRule"/>
</dbReference>
<dbReference type="GO" id="GO:0008360">
    <property type="term" value="P:regulation of cell shape"/>
    <property type="evidence" value="ECO:0007669"/>
    <property type="project" value="UniProtKB-KW"/>
</dbReference>
<dbReference type="GO" id="GO:0019277">
    <property type="term" value="P:UDP-N-acetylgalactosamine biosynthetic process"/>
    <property type="evidence" value="ECO:0007669"/>
    <property type="project" value="InterPro"/>
</dbReference>
<dbReference type="CDD" id="cd01555">
    <property type="entry name" value="UdpNAET"/>
    <property type="match status" value="1"/>
</dbReference>
<dbReference type="FunFam" id="3.65.10.10:FF:000001">
    <property type="entry name" value="UDP-N-acetylglucosamine 1-carboxyvinyltransferase"/>
    <property type="match status" value="1"/>
</dbReference>
<dbReference type="Gene3D" id="3.65.10.10">
    <property type="entry name" value="Enolpyruvate transferase domain"/>
    <property type="match status" value="2"/>
</dbReference>
<dbReference type="HAMAP" id="MF_00111">
    <property type="entry name" value="MurA"/>
    <property type="match status" value="1"/>
</dbReference>
<dbReference type="InterPro" id="IPR001986">
    <property type="entry name" value="Enolpyruvate_Tfrase_dom"/>
</dbReference>
<dbReference type="InterPro" id="IPR036968">
    <property type="entry name" value="Enolpyruvate_Tfrase_sf"/>
</dbReference>
<dbReference type="InterPro" id="IPR050068">
    <property type="entry name" value="MurA_subfamily"/>
</dbReference>
<dbReference type="InterPro" id="IPR013792">
    <property type="entry name" value="RNA3'P_cycl/enolpyr_Trfase_a/b"/>
</dbReference>
<dbReference type="InterPro" id="IPR005750">
    <property type="entry name" value="UDP_GlcNAc_COvinyl_MurA"/>
</dbReference>
<dbReference type="NCBIfam" id="TIGR01072">
    <property type="entry name" value="murA"/>
    <property type="match status" value="1"/>
</dbReference>
<dbReference type="NCBIfam" id="NF006873">
    <property type="entry name" value="PRK09369.1"/>
    <property type="match status" value="1"/>
</dbReference>
<dbReference type="PANTHER" id="PTHR43783">
    <property type="entry name" value="UDP-N-ACETYLGLUCOSAMINE 1-CARBOXYVINYLTRANSFERASE"/>
    <property type="match status" value="1"/>
</dbReference>
<dbReference type="PANTHER" id="PTHR43783:SF1">
    <property type="entry name" value="UDP-N-ACETYLGLUCOSAMINE 1-CARBOXYVINYLTRANSFERASE"/>
    <property type="match status" value="1"/>
</dbReference>
<dbReference type="Pfam" id="PF00275">
    <property type="entry name" value="EPSP_synthase"/>
    <property type="match status" value="1"/>
</dbReference>
<dbReference type="SUPFAM" id="SSF55205">
    <property type="entry name" value="EPT/RTPC-like"/>
    <property type="match status" value="1"/>
</dbReference>
<organism>
    <name type="scientific">Rhizobium leguminosarum bv. trifolii (strain WSM2304)</name>
    <dbReference type="NCBI Taxonomy" id="395492"/>
    <lineage>
        <taxon>Bacteria</taxon>
        <taxon>Pseudomonadati</taxon>
        <taxon>Pseudomonadota</taxon>
        <taxon>Alphaproteobacteria</taxon>
        <taxon>Hyphomicrobiales</taxon>
        <taxon>Rhizobiaceae</taxon>
        <taxon>Rhizobium/Agrobacterium group</taxon>
        <taxon>Rhizobium</taxon>
    </lineage>
</organism>
<keyword id="KW-0131">Cell cycle</keyword>
<keyword id="KW-0132">Cell division</keyword>
<keyword id="KW-0133">Cell shape</keyword>
<keyword id="KW-0961">Cell wall biogenesis/degradation</keyword>
<keyword id="KW-0963">Cytoplasm</keyword>
<keyword id="KW-0573">Peptidoglycan synthesis</keyword>
<keyword id="KW-0670">Pyruvate</keyword>
<keyword id="KW-1185">Reference proteome</keyword>
<keyword id="KW-0808">Transferase</keyword>
<gene>
    <name evidence="1" type="primary">murA</name>
    <name type="ordered locus">Rleg2_0237</name>
</gene>
<feature type="chain" id="PRO_1000094713" description="UDP-N-acetylglucosamine 1-carboxyvinyltransferase">
    <location>
        <begin position="1"/>
        <end position="430"/>
    </location>
</feature>
<feature type="active site" description="Proton donor" evidence="1">
    <location>
        <position position="126"/>
    </location>
</feature>
<feature type="binding site" evidence="1">
    <location>
        <begin position="22"/>
        <end position="23"/>
    </location>
    <ligand>
        <name>phosphoenolpyruvate</name>
        <dbReference type="ChEBI" id="CHEBI:58702"/>
    </ligand>
</feature>
<feature type="binding site" evidence="1">
    <location>
        <position position="102"/>
    </location>
    <ligand>
        <name>UDP-N-acetyl-alpha-D-glucosamine</name>
        <dbReference type="ChEBI" id="CHEBI:57705"/>
    </ligand>
</feature>
<feature type="binding site" evidence="1">
    <location>
        <begin position="131"/>
        <end position="135"/>
    </location>
    <ligand>
        <name>UDP-N-acetyl-alpha-D-glucosamine</name>
        <dbReference type="ChEBI" id="CHEBI:57705"/>
    </ligand>
</feature>
<feature type="binding site" evidence="1">
    <location>
        <begin position="172"/>
        <end position="175"/>
    </location>
    <ligand>
        <name>UDP-N-acetyl-alpha-D-glucosamine</name>
        <dbReference type="ChEBI" id="CHEBI:57705"/>
    </ligand>
</feature>
<feature type="binding site" evidence="1">
    <location>
        <position position="317"/>
    </location>
    <ligand>
        <name>UDP-N-acetyl-alpha-D-glucosamine</name>
        <dbReference type="ChEBI" id="CHEBI:57705"/>
    </ligand>
</feature>
<feature type="binding site" evidence="1">
    <location>
        <position position="339"/>
    </location>
    <ligand>
        <name>UDP-N-acetyl-alpha-D-glucosamine</name>
        <dbReference type="ChEBI" id="CHEBI:57705"/>
    </ligand>
</feature>
<feature type="modified residue" description="2-(S-cysteinyl)pyruvic acid O-phosphothioketal" evidence="1">
    <location>
        <position position="126"/>
    </location>
</feature>
<proteinExistence type="inferred from homology"/>
<name>MURA_RHILW</name>
<accession>B5ZPM0</accession>
<reference key="1">
    <citation type="journal article" date="2010" name="Stand. Genomic Sci.">
        <title>Complete genome sequence of Rhizobium leguminosarum bv trifolii strain WSM2304, an effective microsymbiont of the South American clover Trifolium polymorphum.</title>
        <authorList>
            <person name="Reeve W."/>
            <person name="O'Hara G."/>
            <person name="Chain P."/>
            <person name="Ardley J."/>
            <person name="Brau L."/>
            <person name="Nandesena K."/>
            <person name="Tiwari R."/>
            <person name="Malfatti S."/>
            <person name="Kiss H."/>
            <person name="Lapidus A."/>
            <person name="Copeland A."/>
            <person name="Nolan M."/>
            <person name="Land M."/>
            <person name="Ivanova N."/>
            <person name="Mavromatis K."/>
            <person name="Markowitz V."/>
            <person name="Kyrpides N."/>
            <person name="Melino V."/>
            <person name="Denton M."/>
            <person name="Yates R."/>
            <person name="Howieson J."/>
        </authorList>
    </citation>
    <scope>NUCLEOTIDE SEQUENCE [LARGE SCALE GENOMIC DNA]</scope>
    <source>
        <strain>WSM2304</strain>
    </source>
</reference>
<sequence>MDRIRIVGGNELNGIIPISGAKNAALPLMIASLLTSDTLTLENVPHLADVELLMRILGNHGVDVAVNGRRERQEDSYSRTIHFTCRTIVDTTASYELVSKMRASFWVIGPLLAREGHCRVSLPGGCAIGTRPVDLFIEGLTALGATMEIDAGYINAKAPNGGLIGARYTFPKVSVGATHVVMMAATLARGTTVIGNAAREPEVVDLANCLNAMGAKISGAGTATITIEGVTSLSGARHRVLPDRIETGTYAMAVAMAGGDVVLENTDVALLDTALETLRRAGADISATNNGMRVKRNGAGIKPVDIVTDPFPGFPTDLQAQFMALMTRSSGISHVTETIFENRFMHVQELARLGARITLSGQTAKIEGVQRLRGAPVMATDLRASVSLVIAGLAAEGETTVSRVYHLDRGFERLEEKLTRCGAVVERISE</sequence>
<comment type="function">
    <text evidence="1">Cell wall formation. Adds enolpyruvyl to UDP-N-acetylglucosamine.</text>
</comment>
<comment type="catalytic activity">
    <reaction evidence="1">
        <text>phosphoenolpyruvate + UDP-N-acetyl-alpha-D-glucosamine = UDP-N-acetyl-3-O-(1-carboxyvinyl)-alpha-D-glucosamine + phosphate</text>
        <dbReference type="Rhea" id="RHEA:18681"/>
        <dbReference type="ChEBI" id="CHEBI:43474"/>
        <dbReference type="ChEBI" id="CHEBI:57705"/>
        <dbReference type="ChEBI" id="CHEBI:58702"/>
        <dbReference type="ChEBI" id="CHEBI:68483"/>
        <dbReference type="EC" id="2.5.1.7"/>
    </reaction>
</comment>
<comment type="pathway">
    <text evidence="1">Cell wall biogenesis; peptidoglycan biosynthesis.</text>
</comment>
<comment type="subcellular location">
    <subcellularLocation>
        <location evidence="1">Cytoplasm</location>
    </subcellularLocation>
</comment>
<comment type="similarity">
    <text evidence="1">Belongs to the EPSP synthase family. MurA subfamily.</text>
</comment>
<evidence type="ECO:0000255" key="1">
    <source>
        <dbReference type="HAMAP-Rule" id="MF_00111"/>
    </source>
</evidence>